<organism>
    <name type="scientific">Escherichia coli (strain SMS-3-5 / SECEC)</name>
    <dbReference type="NCBI Taxonomy" id="439855"/>
    <lineage>
        <taxon>Bacteria</taxon>
        <taxon>Pseudomonadati</taxon>
        <taxon>Pseudomonadota</taxon>
        <taxon>Gammaproteobacteria</taxon>
        <taxon>Enterobacterales</taxon>
        <taxon>Enterobacteriaceae</taxon>
        <taxon>Escherichia</taxon>
    </lineage>
</organism>
<evidence type="ECO:0000255" key="1">
    <source>
        <dbReference type="HAMAP-Rule" id="MF_01433"/>
    </source>
</evidence>
<reference key="1">
    <citation type="journal article" date="2008" name="J. Bacteriol.">
        <title>Insights into the environmental resistance gene pool from the genome sequence of the multidrug-resistant environmental isolate Escherichia coli SMS-3-5.</title>
        <authorList>
            <person name="Fricke W.F."/>
            <person name="Wright M.S."/>
            <person name="Lindell A.H."/>
            <person name="Harkins D.M."/>
            <person name="Baker-Austin C."/>
            <person name="Ravel J."/>
            <person name="Stepanauskas R."/>
        </authorList>
    </citation>
    <scope>NUCLEOTIDE SEQUENCE [LARGE SCALE GENOMIC DNA]</scope>
    <source>
        <strain>SMS-3-5 / SECEC</strain>
    </source>
</reference>
<dbReference type="EC" id="3.2.2.8" evidence="1"/>
<dbReference type="EMBL" id="CP000970">
    <property type="protein sequence ID" value="ACB19266.1"/>
    <property type="molecule type" value="Genomic_DNA"/>
</dbReference>
<dbReference type="RefSeq" id="WP_000415455.1">
    <property type="nucleotide sequence ID" value="NC_010498.1"/>
</dbReference>
<dbReference type="SMR" id="B1LKQ9"/>
<dbReference type="GeneID" id="75206415"/>
<dbReference type="KEGG" id="ecm:EcSMS35_2309"/>
<dbReference type="HOGENOM" id="CLU_036838_2_0_6"/>
<dbReference type="Proteomes" id="UP000007011">
    <property type="component" value="Chromosome"/>
</dbReference>
<dbReference type="GO" id="GO:0005829">
    <property type="term" value="C:cytosol"/>
    <property type="evidence" value="ECO:0007669"/>
    <property type="project" value="TreeGrafter"/>
</dbReference>
<dbReference type="GO" id="GO:0005509">
    <property type="term" value="F:calcium ion binding"/>
    <property type="evidence" value="ECO:0007669"/>
    <property type="project" value="UniProtKB-UniRule"/>
</dbReference>
<dbReference type="GO" id="GO:0008477">
    <property type="term" value="F:purine nucleosidase activity"/>
    <property type="evidence" value="ECO:0007669"/>
    <property type="project" value="TreeGrafter"/>
</dbReference>
<dbReference type="GO" id="GO:0045437">
    <property type="term" value="F:uridine nucleosidase activity"/>
    <property type="evidence" value="ECO:0007669"/>
    <property type="project" value="UniProtKB-ARBA"/>
</dbReference>
<dbReference type="GO" id="GO:0006152">
    <property type="term" value="P:purine nucleoside catabolic process"/>
    <property type="evidence" value="ECO:0007669"/>
    <property type="project" value="TreeGrafter"/>
</dbReference>
<dbReference type="GO" id="GO:0006206">
    <property type="term" value="P:pyrimidine nucleobase metabolic process"/>
    <property type="evidence" value="ECO:0007669"/>
    <property type="project" value="UniProtKB-UniRule"/>
</dbReference>
<dbReference type="GO" id="GO:0046133">
    <property type="term" value="P:pyrimidine ribonucleoside catabolic process"/>
    <property type="evidence" value="ECO:0007669"/>
    <property type="project" value="InterPro"/>
</dbReference>
<dbReference type="CDD" id="cd02651">
    <property type="entry name" value="nuc_hydro_IU_UC_XIUA"/>
    <property type="match status" value="1"/>
</dbReference>
<dbReference type="FunFam" id="3.90.245.10:FF:000003">
    <property type="entry name" value="Pyrimidine-specific ribonucleoside hydrolase RihB"/>
    <property type="match status" value="1"/>
</dbReference>
<dbReference type="Gene3D" id="3.90.245.10">
    <property type="entry name" value="Ribonucleoside hydrolase-like"/>
    <property type="match status" value="1"/>
</dbReference>
<dbReference type="HAMAP" id="MF_01433">
    <property type="entry name" value="Pyrim_hydro_RihB"/>
    <property type="match status" value="1"/>
</dbReference>
<dbReference type="InterPro" id="IPR015910">
    <property type="entry name" value="I/U_nuclsd_hydro_CS"/>
</dbReference>
<dbReference type="InterPro" id="IPR001910">
    <property type="entry name" value="Inosine/uridine_hydrolase_dom"/>
</dbReference>
<dbReference type="InterPro" id="IPR023186">
    <property type="entry name" value="IUNH"/>
</dbReference>
<dbReference type="InterPro" id="IPR022977">
    <property type="entry name" value="Pyrim_hydro_RihB"/>
</dbReference>
<dbReference type="InterPro" id="IPR036452">
    <property type="entry name" value="Ribo_hydro-like"/>
</dbReference>
<dbReference type="NCBIfam" id="NF007417">
    <property type="entry name" value="PRK09955.1"/>
    <property type="match status" value="1"/>
</dbReference>
<dbReference type="PANTHER" id="PTHR12304">
    <property type="entry name" value="INOSINE-URIDINE PREFERRING NUCLEOSIDE HYDROLASE"/>
    <property type="match status" value="1"/>
</dbReference>
<dbReference type="PANTHER" id="PTHR12304:SF4">
    <property type="entry name" value="URIDINE NUCLEOSIDASE"/>
    <property type="match status" value="1"/>
</dbReference>
<dbReference type="Pfam" id="PF01156">
    <property type="entry name" value="IU_nuc_hydro"/>
    <property type="match status" value="1"/>
</dbReference>
<dbReference type="SUPFAM" id="SSF53590">
    <property type="entry name" value="Nucleoside hydrolase"/>
    <property type="match status" value="1"/>
</dbReference>
<dbReference type="PROSITE" id="PS01247">
    <property type="entry name" value="IUNH"/>
    <property type="match status" value="1"/>
</dbReference>
<gene>
    <name evidence="1" type="primary">rihB</name>
    <name type="ordered locus">EcSMS35_2309</name>
</gene>
<sequence>MEKRKIILDCDPGHDDAIAMMMAAKHPAIDLLGITIVAGNQTLDKTLINGLNVCQKLEINVPVYAGMPQPIMRQQIVADNIHGETGLDGPVFEPLTRQAESTHAVKYIIDTLMASDGDITLVPVGPLSNIAVAMRMQPAILPKIREIVLMGGAYGTGNFTPSAEFNIFADPEAARVVFTSGVPLVMMGLDLTNQTVCTPDVIARMERAGGPAGELFSDIMNFTLKTQFENYGLAGGPVHDATCIGYLINPDGIKTQEMYVEVDVNSGPCYGRTVCDELGVLGKPANTKVGITIDTDWFWGLVEECVRGYIKTH</sequence>
<protein>
    <recommendedName>
        <fullName evidence="1">Pyrimidine-specific ribonucleoside hydrolase RihB</fullName>
        <ecNumber evidence="1">3.2.2.8</ecNumber>
    </recommendedName>
    <alternativeName>
        <fullName evidence="1">Cytidine/uridine-specific hydrolase</fullName>
    </alternativeName>
</protein>
<comment type="function">
    <text evidence="1">Hydrolyzes cytidine or uridine to ribose and cytosine or uracil, respectively. Has a clear preference for cytidine over uridine. Strictly specific for ribonucleosides.</text>
</comment>
<comment type="catalytic activity">
    <reaction evidence="1">
        <text>a pyrimidine ribonucleoside + H2O = a pyrimidine nucleobase + D-ribose</text>
        <dbReference type="Rhea" id="RHEA:56816"/>
        <dbReference type="ChEBI" id="CHEBI:15377"/>
        <dbReference type="ChEBI" id="CHEBI:26432"/>
        <dbReference type="ChEBI" id="CHEBI:47013"/>
        <dbReference type="ChEBI" id="CHEBI:141014"/>
        <dbReference type="EC" id="3.2.2.8"/>
    </reaction>
</comment>
<comment type="cofactor">
    <cofactor evidence="1">
        <name>Ca(2+)</name>
        <dbReference type="ChEBI" id="CHEBI:29108"/>
    </cofactor>
    <text evidence="1">Binds 1 Ca(2+) ion per monomer.</text>
</comment>
<comment type="subunit">
    <text evidence="1">Homotetramer.</text>
</comment>
<comment type="similarity">
    <text evidence="1">Belongs to the IUNH family. RihB subfamily.</text>
</comment>
<name>RIHB_ECOSM</name>
<accession>B1LKQ9</accession>
<feature type="chain" id="PRO_1000145834" description="Pyrimidine-specific ribonucleoside hydrolase RihB">
    <location>
        <begin position="1"/>
        <end position="313"/>
    </location>
</feature>
<feature type="active site" description="Proton acceptor" evidence="1">
    <location>
        <position position="11"/>
    </location>
</feature>
<feature type="binding site" evidence="1">
    <location>
        <position position="11"/>
    </location>
    <ligand>
        <name>Ca(2+)</name>
        <dbReference type="ChEBI" id="CHEBI:29108"/>
    </ligand>
</feature>
<feature type="binding site" evidence="1">
    <location>
        <position position="16"/>
    </location>
    <ligand>
        <name>Ca(2+)</name>
        <dbReference type="ChEBI" id="CHEBI:29108"/>
    </ligand>
</feature>
<feature type="binding site" evidence="1">
    <location>
        <position position="124"/>
    </location>
    <ligand>
        <name>Ca(2+)</name>
        <dbReference type="ChEBI" id="CHEBI:29108"/>
    </ligand>
</feature>
<feature type="binding site" evidence="1">
    <location>
        <position position="227"/>
    </location>
    <ligand>
        <name>substrate</name>
    </ligand>
</feature>
<feature type="binding site" evidence="1">
    <location>
        <position position="239"/>
    </location>
    <ligand>
        <name>substrate</name>
    </ligand>
</feature>
<feature type="binding site" evidence="1">
    <location>
        <position position="240"/>
    </location>
    <ligand>
        <name>Ca(2+)</name>
        <dbReference type="ChEBI" id="CHEBI:29108"/>
    </ligand>
</feature>
<proteinExistence type="inferred from homology"/>
<keyword id="KW-0106">Calcium</keyword>
<keyword id="KW-0326">Glycosidase</keyword>
<keyword id="KW-0378">Hydrolase</keyword>
<keyword id="KW-0479">Metal-binding</keyword>